<dbReference type="EC" id="7.1.1.-" evidence="1"/>
<dbReference type="EMBL" id="DQ897681">
    <property type="protein sequence ID" value="ABI17267.1"/>
    <property type="molecule type" value="Genomic_DNA"/>
</dbReference>
<dbReference type="RefSeq" id="YP_784076.1">
    <property type="nucleotide sequence ID" value="NC_008454.1"/>
</dbReference>
<dbReference type="SMR" id="Q06FV5"/>
<dbReference type="GeneID" id="4362895"/>
<dbReference type="GO" id="GO:0009535">
    <property type="term" value="C:chloroplast thylakoid membrane"/>
    <property type="evidence" value="ECO:0007669"/>
    <property type="project" value="UniProtKB-SubCell"/>
</dbReference>
<dbReference type="GO" id="GO:0030964">
    <property type="term" value="C:NADH dehydrogenase complex"/>
    <property type="evidence" value="ECO:0007669"/>
    <property type="project" value="TreeGrafter"/>
</dbReference>
<dbReference type="GO" id="GO:0008137">
    <property type="term" value="F:NADH dehydrogenase (ubiquinone) activity"/>
    <property type="evidence" value="ECO:0007669"/>
    <property type="project" value="InterPro"/>
</dbReference>
<dbReference type="GO" id="GO:0048038">
    <property type="term" value="F:quinone binding"/>
    <property type="evidence" value="ECO:0007669"/>
    <property type="project" value="UniProtKB-KW"/>
</dbReference>
<dbReference type="GO" id="GO:0019684">
    <property type="term" value="P:photosynthesis, light reaction"/>
    <property type="evidence" value="ECO:0007669"/>
    <property type="project" value="UniProtKB-UniRule"/>
</dbReference>
<dbReference type="FunFam" id="1.20.58.1610:FF:000001">
    <property type="entry name" value="NAD(P)H-quinone oxidoreductase subunit 3, chloroplastic"/>
    <property type="match status" value="1"/>
</dbReference>
<dbReference type="Gene3D" id="1.20.58.1610">
    <property type="entry name" value="NADH:ubiquinone/plastoquinone oxidoreductase, chain 3"/>
    <property type="match status" value="1"/>
</dbReference>
<dbReference type="HAMAP" id="MF_01394">
    <property type="entry name" value="NDH1_NuoA"/>
    <property type="match status" value="1"/>
</dbReference>
<dbReference type="InterPro" id="IPR023043">
    <property type="entry name" value="NAD(P)H_OxRDtase_bac/plastid"/>
</dbReference>
<dbReference type="InterPro" id="IPR000440">
    <property type="entry name" value="NADH_UbQ/plastoQ_OxRdtase_su3"/>
</dbReference>
<dbReference type="InterPro" id="IPR038430">
    <property type="entry name" value="NDAH_ubi_oxred_su3_sf"/>
</dbReference>
<dbReference type="PANTHER" id="PTHR11058">
    <property type="entry name" value="NADH-UBIQUINONE OXIDOREDUCTASE CHAIN 3"/>
    <property type="match status" value="1"/>
</dbReference>
<dbReference type="PANTHER" id="PTHR11058:SF9">
    <property type="entry name" value="NADH-UBIQUINONE OXIDOREDUCTASE CHAIN 3"/>
    <property type="match status" value="1"/>
</dbReference>
<dbReference type="Pfam" id="PF00507">
    <property type="entry name" value="Oxidored_q4"/>
    <property type="match status" value="1"/>
</dbReference>
<name>NU3C_PELHO</name>
<protein>
    <recommendedName>
        <fullName evidence="1">NAD(P)H-quinone oxidoreductase subunit 3, chloroplastic</fullName>
        <ecNumber evidence="1">7.1.1.-</ecNumber>
    </recommendedName>
    <alternativeName>
        <fullName evidence="1">NAD(P)H dehydrogenase subunit 3</fullName>
    </alternativeName>
    <alternativeName>
        <fullName evidence="1">NADH-plastoquinone oxidoreductase subunit 3</fullName>
    </alternativeName>
</protein>
<reference key="1">
    <citation type="journal article" date="2006" name="Mol. Biol. Evol.">
        <title>The complete chloroplast genome sequence of Pelargonium x hortorum: organization and evolution of the largest and most highly rearranged chloroplast genome of land plants.</title>
        <authorList>
            <person name="Chumley T.W."/>
            <person name="Palmer J.D."/>
            <person name="Mower J.P."/>
            <person name="Fourcade H.M."/>
            <person name="Calie P.J."/>
            <person name="Boore J.L."/>
            <person name="Jansen R.K."/>
        </authorList>
    </citation>
    <scope>NUCLEOTIDE SEQUENCE [LARGE SCALE GENOMIC DNA]</scope>
    <source>
        <strain>Ringo White</strain>
    </source>
</reference>
<proteinExistence type="inferred from homology"/>
<geneLocation type="chloroplast"/>
<accession>Q06FV5</accession>
<keyword id="KW-0150">Chloroplast</keyword>
<keyword id="KW-0472">Membrane</keyword>
<keyword id="KW-0520">NAD</keyword>
<keyword id="KW-0521">NADP</keyword>
<keyword id="KW-0934">Plastid</keyword>
<keyword id="KW-0618">Plastoquinone</keyword>
<keyword id="KW-0874">Quinone</keyword>
<keyword id="KW-0793">Thylakoid</keyword>
<keyword id="KW-1278">Translocase</keyword>
<keyword id="KW-0812">Transmembrane</keyword>
<keyword id="KW-1133">Transmembrane helix</keyword>
<keyword id="KW-0813">Transport</keyword>
<comment type="function">
    <text evidence="1">NDH shuttles electrons from NAD(P)H:plastoquinone, via FMN and iron-sulfur (Fe-S) centers, to quinones in the photosynthetic chain and possibly in a chloroplast respiratory chain. The immediate electron acceptor for the enzyme in this species is believed to be plastoquinone. Couples the redox reaction to proton translocation, and thus conserves the redox energy in a proton gradient.</text>
</comment>
<comment type="catalytic activity">
    <reaction evidence="1">
        <text>a plastoquinone + NADH + (n+1) H(+)(in) = a plastoquinol + NAD(+) + n H(+)(out)</text>
        <dbReference type="Rhea" id="RHEA:42608"/>
        <dbReference type="Rhea" id="RHEA-COMP:9561"/>
        <dbReference type="Rhea" id="RHEA-COMP:9562"/>
        <dbReference type="ChEBI" id="CHEBI:15378"/>
        <dbReference type="ChEBI" id="CHEBI:17757"/>
        <dbReference type="ChEBI" id="CHEBI:57540"/>
        <dbReference type="ChEBI" id="CHEBI:57945"/>
        <dbReference type="ChEBI" id="CHEBI:62192"/>
    </reaction>
</comment>
<comment type="catalytic activity">
    <reaction evidence="1">
        <text>a plastoquinone + NADPH + (n+1) H(+)(in) = a plastoquinol + NADP(+) + n H(+)(out)</text>
        <dbReference type="Rhea" id="RHEA:42612"/>
        <dbReference type="Rhea" id="RHEA-COMP:9561"/>
        <dbReference type="Rhea" id="RHEA-COMP:9562"/>
        <dbReference type="ChEBI" id="CHEBI:15378"/>
        <dbReference type="ChEBI" id="CHEBI:17757"/>
        <dbReference type="ChEBI" id="CHEBI:57783"/>
        <dbReference type="ChEBI" id="CHEBI:58349"/>
        <dbReference type="ChEBI" id="CHEBI:62192"/>
    </reaction>
</comment>
<comment type="subunit">
    <text evidence="1">NDH is composed of at least 16 different subunits, 5 of which are encoded in the nucleus.</text>
</comment>
<comment type="subcellular location">
    <subcellularLocation>
        <location evidence="1">Plastid</location>
        <location evidence="1">Chloroplast thylakoid membrane</location>
        <topology evidence="1">Multi-pass membrane protein</topology>
    </subcellularLocation>
</comment>
<comment type="similarity">
    <text evidence="1">Belongs to the complex I subunit 3 family.</text>
</comment>
<feature type="chain" id="PRO_0000362863" description="NAD(P)H-quinone oxidoreductase subunit 3, chloroplastic">
    <location>
        <begin position="1"/>
        <end position="120"/>
    </location>
</feature>
<feature type="transmembrane region" description="Helical" evidence="1">
    <location>
        <begin position="10"/>
        <end position="30"/>
    </location>
</feature>
<feature type="transmembrane region" description="Helical" evidence="1">
    <location>
        <begin position="64"/>
        <end position="84"/>
    </location>
</feature>
<feature type="transmembrane region" description="Helical" evidence="1">
    <location>
        <begin position="88"/>
        <end position="108"/>
    </location>
</feature>
<evidence type="ECO:0000255" key="1">
    <source>
        <dbReference type="HAMAP-Rule" id="MF_01394"/>
    </source>
</evidence>
<sequence length="120" mass="13779">MFLLYEYDLFWVFLIISSLIPILAFLISGVLAPISEGPEKLSSYESGIEPMGDAWLQFRIRYYIFALVFVVFDVETVFLYPWAMSFDVLGVSVFIEALVFVLILIVGSVYAWRKGALEWS</sequence>
<organism>
    <name type="scientific">Pelargonium hortorum</name>
    <name type="common">Common geranium</name>
    <name type="synonym">Pelargonium inquinans x Pelargonium zonale</name>
    <dbReference type="NCBI Taxonomy" id="4031"/>
    <lineage>
        <taxon>Eukaryota</taxon>
        <taxon>Viridiplantae</taxon>
        <taxon>Streptophyta</taxon>
        <taxon>Embryophyta</taxon>
        <taxon>Tracheophyta</taxon>
        <taxon>Spermatophyta</taxon>
        <taxon>Magnoliopsida</taxon>
        <taxon>eudicotyledons</taxon>
        <taxon>Gunneridae</taxon>
        <taxon>Pentapetalae</taxon>
        <taxon>rosids</taxon>
        <taxon>malvids</taxon>
        <taxon>Geraniales</taxon>
        <taxon>Geraniaceae</taxon>
        <taxon>Pelargonium</taxon>
    </lineage>
</organism>
<gene>
    <name evidence="1" type="primary">ndhC</name>
</gene>